<comment type="function">
    <text evidence="1">RNA chaperone that binds small regulatory RNA (sRNAs) and mRNAs to facilitate mRNA translational regulation in response to envelope stress, environmental stress and changes in metabolite concentrations. Also binds with high specificity to tRNAs.</text>
</comment>
<comment type="subunit">
    <text evidence="1">Homohexamer.</text>
</comment>
<comment type="similarity">
    <text evidence="1">Belongs to the Hfq family.</text>
</comment>
<sequence length="102" mass="11166">MAKGQSLQDPFLNALRRERVPVSIYLVNGIKLQGQIESFDQFVILLKNTVSQMVYKHAISTVVPSRPVSHHSNNAGGGTSSNYHHGSSAQNTSAQQDSEETE</sequence>
<reference key="1">
    <citation type="journal article" date="2011" name="Proc. Natl. Acad. Sci. U.S.A.">
        <title>Genomic anatomy of Escherichia coli O157:H7 outbreaks.</title>
        <authorList>
            <person name="Eppinger M."/>
            <person name="Mammel M.K."/>
            <person name="Leclerc J.E."/>
            <person name="Ravel J."/>
            <person name="Cebula T.A."/>
        </authorList>
    </citation>
    <scope>NUCLEOTIDE SEQUENCE [LARGE SCALE GENOMIC DNA]</scope>
    <source>
        <strain>EC4115 / EHEC</strain>
    </source>
</reference>
<gene>
    <name evidence="1" type="primary">hfq</name>
    <name type="ordered locus">ECH74115_5688</name>
</gene>
<feature type="chain" id="PRO_1000190326" description="RNA-binding protein Hfq">
    <location>
        <begin position="1"/>
        <end position="102"/>
    </location>
</feature>
<feature type="domain" description="Sm" evidence="2">
    <location>
        <begin position="9"/>
        <end position="68"/>
    </location>
</feature>
<feature type="region of interest" description="Disordered" evidence="3">
    <location>
        <begin position="63"/>
        <end position="102"/>
    </location>
</feature>
<feature type="compositionally biased region" description="Polar residues" evidence="3">
    <location>
        <begin position="70"/>
        <end position="96"/>
    </location>
</feature>
<proteinExistence type="inferred from homology"/>
<name>HFQ_ECO5E</name>
<organism>
    <name type="scientific">Escherichia coli O157:H7 (strain EC4115 / EHEC)</name>
    <dbReference type="NCBI Taxonomy" id="444450"/>
    <lineage>
        <taxon>Bacteria</taxon>
        <taxon>Pseudomonadati</taxon>
        <taxon>Pseudomonadota</taxon>
        <taxon>Gammaproteobacteria</taxon>
        <taxon>Enterobacterales</taxon>
        <taxon>Enterobacteriaceae</taxon>
        <taxon>Escherichia</taxon>
    </lineage>
</organism>
<protein>
    <recommendedName>
        <fullName evidence="1">RNA-binding protein Hfq</fullName>
    </recommendedName>
</protein>
<keyword id="KW-0694">RNA-binding</keyword>
<keyword id="KW-0346">Stress response</keyword>
<dbReference type="EMBL" id="CP001164">
    <property type="protein sequence ID" value="ACI39520.1"/>
    <property type="molecule type" value="Genomic_DNA"/>
</dbReference>
<dbReference type="RefSeq" id="WP_001051883.1">
    <property type="nucleotide sequence ID" value="NC_011353.1"/>
</dbReference>
<dbReference type="SMR" id="B5Z2H8"/>
<dbReference type="GeneID" id="93777649"/>
<dbReference type="KEGG" id="ecf:ECH74115_5688"/>
<dbReference type="HOGENOM" id="CLU_113688_2_1_6"/>
<dbReference type="GO" id="GO:0005829">
    <property type="term" value="C:cytosol"/>
    <property type="evidence" value="ECO:0007669"/>
    <property type="project" value="TreeGrafter"/>
</dbReference>
<dbReference type="GO" id="GO:0003723">
    <property type="term" value="F:RNA binding"/>
    <property type="evidence" value="ECO:0007669"/>
    <property type="project" value="UniProtKB-UniRule"/>
</dbReference>
<dbReference type="GO" id="GO:0006355">
    <property type="term" value="P:regulation of DNA-templated transcription"/>
    <property type="evidence" value="ECO:0007669"/>
    <property type="project" value="InterPro"/>
</dbReference>
<dbReference type="GO" id="GO:0043487">
    <property type="term" value="P:regulation of RNA stability"/>
    <property type="evidence" value="ECO:0007669"/>
    <property type="project" value="TreeGrafter"/>
</dbReference>
<dbReference type="GO" id="GO:0045974">
    <property type="term" value="P:regulation of translation, ncRNA-mediated"/>
    <property type="evidence" value="ECO:0007669"/>
    <property type="project" value="TreeGrafter"/>
</dbReference>
<dbReference type="CDD" id="cd01716">
    <property type="entry name" value="Hfq"/>
    <property type="match status" value="1"/>
</dbReference>
<dbReference type="FunFam" id="2.30.30.100:FF:000001">
    <property type="entry name" value="RNA-binding protein Hfq"/>
    <property type="match status" value="1"/>
</dbReference>
<dbReference type="Gene3D" id="2.30.30.100">
    <property type="match status" value="1"/>
</dbReference>
<dbReference type="HAMAP" id="MF_00436">
    <property type="entry name" value="Hfq"/>
    <property type="match status" value="1"/>
</dbReference>
<dbReference type="InterPro" id="IPR005001">
    <property type="entry name" value="Hfq"/>
</dbReference>
<dbReference type="InterPro" id="IPR010920">
    <property type="entry name" value="LSM_dom_sf"/>
</dbReference>
<dbReference type="InterPro" id="IPR047575">
    <property type="entry name" value="Sm"/>
</dbReference>
<dbReference type="NCBIfam" id="TIGR02383">
    <property type="entry name" value="Hfq"/>
    <property type="match status" value="1"/>
</dbReference>
<dbReference type="NCBIfam" id="NF001602">
    <property type="entry name" value="PRK00395.1"/>
    <property type="match status" value="1"/>
</dbReference>
<dbReference type="PANTHER" id="PTHR34772">
    <property type="entry name" value="RNA-BINDING PROTEIN HFQ"/>
    <property type="match status" value="1"/>
</dbReference>
<dbReference type="PANTHER" id="PTHR34772:SF1">
    <property type="entry name" value="RNA-BINDING PROTEIN HFQ"/>
    <property type="match status" value="1"/>
</dbReference>
<dbReference type="Pfam" id="PF17209">
    <property type="entry name" value="Hfq"/>
    <property type="match status" value="1"/>
</dbReference>
<dbReference type="SUPFAM" id="SSF50182">
    <property type="entry name" value="Sm-like ribonucleoproteins"/>
    <property type="match status" value="1"/>
</dbReference>
<dbReference type="PROSITE" id="PS52002">
    <property type="entry name" value="SM"/>
    <property type="match status" value="1"/>
</dbReference>
<evidence type="ECO:0000255" key="1">
    <source>
        <dbReference type="HAMAP-Rule" id="MF_00436"/>
    </source>
</evidence>
<evidence type="ECO:0000255" key="2">
    <source>
        <dbReference type="PROSITE-ProRule" id="PRU01346"/>
    </source>
</evidence>
<evidence type="ECO:0000256" key="3">
    <source>
        <dbReference type="SAM" id="MobiDB-lite"/>
    </source>
</evidence>
<accession>B5Z2H8</accession>